<evidence type="ECO:0000255" key="1">
    <source>
        <dbReference type="HAMAP-Rule" id="MF_03117"/>
    </source>
</evidence>
<keyword id="KW-0028">Amino-acid biosynthesis</keyword>
<keyword id="KW-0963">Cytoplasm</keyword>
<keyword id="KW-0378">Hydrolase</keyword>
<keyword id="KW-0460">Magnesium</keyword>
<keyword id="KW-0479">Metal-binding</keyword>
<keyword id="KW-0486">Methionine biosynthesis</keyword>
<keyword id="KW-0539">Nucleus</keyword>
<keyword id="KW-1185">Reference proteome</keyword>
<name>ENOPH_DANRE</name>
<comment type="function">
    <text evidence="1">Bifunctional enzyme that catalyzes the enolization of 2,3-diketo-5-methylthiopentyl-1-phosphate (DK-MTP-1-P) into the intermediate 2-hydroxy-3-keto-5-methylthiopentenyl-1-phosphate (HK-MTPenyl-1-P), which is then dephosphorylated to form the acireductone 1,2-dihydroxy-3-keto-5-methylthiopentene (DHK-MTPene).</text>
</comment>
<comment type="catalytic activity">
    <reaction evidence="1">
        <text>5-methylsulfanyl-2,3-dioxopentyl phosphate + H2O = 1,2-dihydroxy-5-(methylsulfanyl)pent-1-en-3-one + phosphate</text>
        <dbReference type="Rhea" id="RHEA:21700"/>
        <dbReference type="ChEBI" id="CHEBI:15377"/>
        <dbReference type="ChEBI" id="CHEBI:43474"/>
        <dbReference type="ChEBI" id="CHEBI:49252"/>
        <dbReference type="ChEBI" id="CHEBI:58828"/>
        <dbReference type="EC" id="3.1.3.77"/>
    </reaction>
</comment>
<comment type="cofactor">
    <cofactor evidence="1">
        <name>Mg(2+)</name>
        <dbReference type="ChEBI" id="CHEBI:18420"/>
    </cofactor>
    <text evidence="1">Binds 1 Mg(2+) ion per subunit.</text>
</comment>
<comment type="pathway">
    <text evidence="1">Amino-acid biosynthesis; L-methionine biosynthesis via salvage pathway; L-methionine from S-methyl-5-thio-alpha-D-ribose 1-phosphate: step 3/6.</text>
</comment>
<comment type="pathway">
    <text evidence="1">Amino-acid biosynthesis; L-methionine biosynthesis via salvage pathway; L-methionine from S-methyl-5-thio-alpha-D-ribose 1-phosphate: step 4/6.</text>
</comment>
<comment type="subunit">
    <text evidence="1">Monomer.</text>
</comment>
<comment type="subcellular location">
    <subcellularLocation>
        <location evidence="1">Cytoplasm</location>
    </subcellularLocation>
    <subcellularLocation>
        <location evidence="1">Nucleus</location>
    </subcellularLocation>
</comment>
<comment type="similarity">
    <text evidence="1">Belongs to the HAD-like hydrolase superfamily. MasA/MtnC family.</text>
</comment>
<feature type="chain" id="PRO_0000254010" description="Enolase-phosphatase E1">
    <location>
        <begin position="1"/>
        <end position="261"/>
    </location>
</feature>
<feature type="binding site" evidence="1">
    <location>
        <position position="16"/>
    </location>
    <ligand>
        <name>Mg(2+)</name>
        <dbReference type="ChEBI" id="CHEBI:18420"/>
    </ligand>
</feature>
<feature type="binding site" evidence="1">
    <location>
        <position position="18"/>
    </location>
    <ligand>
        <name>Mg(2+)</name>
        <dbReference type="ChEBI" id="CHEBI:18420"/>
    </ligand>
</feature>
<feature type="binding site" evidence="1">
    <location>
        <begin position="153"/>
        <end position="154"/>
    </location>
    <ligand>
        <name>substrate</name>
    </ligand>
</feature>
<feature type="binding site" evidence="1">
    <location>
        <position position="187"/>
    </location>
    <ligand>
        <name>substrate</name>
    </ligand>
</feature>
<feature type="binding site" evidence="1">
    <location>
        <position position="212"/>
    </location>
    <ligand>
        <name>Mg(2+)</name>
        <dbReference type="ChEBI" id="CHEBI:18420"/>
    </ligand>
</feature>
<organism>
    <name type="scientific">Danio rerio</name>
    <name type="common">Zebrafish</name>
    <name type="synonym">Brachydanio rerio</name>
    <dbReference type="NCBI Taxonomy" id="7955"/>
    <lineage>
        <taxon>Eukaryota</taxon>
        <taxon>Metazoa</taxon>
        <taxon>Chordata</taxon>
        <taxon>Craniata</taxon>
        <taxon>Vertebrata</taxon>
        <taxon>Euteleostomi</taxon>
        <taxon>Actinopterygii</taxon>
        <taxon>Neopterygii</taxon>
        <taxon>Teleostei</taxon>
        <taxon>Ostariophysi</taxon>
        <taxon>Cypriniformes</taxon>
        <taxon>Danionidae</taxon>
        <taxon>Danioninae</taxon>
        <taxon>Danio</taxon>
    </lineage>
</organism>
<dbReference type="EC" id="3.1.3.77" evidence="1"/>
<dbReference type="EMBL" id="BC074060">
    <property type="protein sequence ID" value="AAH74060.1"/>
    <property type="molecule type" value="mRNA"/>
</dbReference>
<dbReference type="RefSeq" id="NP_001002226.1">
    <property type="nucleotide sequence ID" value="NM_001002226.1"/>
</dbReference>
<dbReference type="SMR" id="Q6GMI7"/>
<dbReference type="FunCoup" id="Q6GMI7">
    <property type="interactions" value="1702"/>
</dbReference>
<dbReference type="STRING" id="7955.ENSDARP00000031494"/>
<dbReference type="PaxDb" id="7955-ENSDARP00000031494"/>
<dbReference type="Ensembl" id="ENSDART00000031165">
    <property type="protein sequence ID" value="ENSDARP00000031494"/>
    <property type="gene ID" value="ENSDARG00000026198"/>
</dbReference>
<dbReference type="Ensembl" id="ENSDART00000180768">
    <property type="protein sequence ID" value="ENSDARP00000156050"/>
    <property type="gene ID" value="ENSDARG00000111634"/>
</dbReference>
<dbReference type="Ensembl" id="ENSDART00000187832">
    <property type="protein sequence ID" value="ENSDARP00000152296"/>
    <property type="gene ID" value="ENSDARG00000114318"/>
</dbReference>
<dbReference type="GeneID" id="431773"/>
<dbReference type="KEGG" id="dre:431773"/>
<dbReference type="AGR" id="ZFIN:ZDB-GENE-040704-73"/>
<dbReference type="CTD" id="58478"/>
<dbReference type="ZFIN" id="ZDB-GENE-040704-73">
    <property type="gene designation" value="enoph1"/>
</dbReference>
<dbReference type="eggNOG" id="KOG2630">
    <property type="taxonomic scope" value="Eukaryota"/>
</dbReference>
<dbReference type="HOGENOM" id="CLU_023273_0_0_1"/>
<dbReference type="InParanoid" id="Q6GMI7"/>
<dbReference type="OMA" id="LQGMVWE"/>
<dbReference type="OrthoDB" id="272500at2759"/>
<dbReference type="PhylomeDB" id="Q6GMI7"/>
<dbReference type="TreeFam" id="TF105939"/>
<dbReference type="Reactome" id="R-DRE-1237112">
    <property type="pathway name" value="Methionine salvage pathway"/>
</dbReference>
<dbReference type="UniPathway" id="UPA00904">
    <property type="reaction ID" value="UER00876"/>
</dbReference>
<dbReference type="UniPathway" id="UPA00904">
    <property type="reaction ID" value="UER00877"/>
</dbReference>
<dbReference type="PRO" id="PR:Q6GMI7"/>
<dbReference type="Proteomes" id="UP000000437">
    <property type="component" value="Alternate scaffold 10"/>
</dbReference>
<dbReference type="Proteomes" id="UP000000437">
    <property type="component" value="Chromosome 10"/>
</dbReference>
<dbReference type="Bgee" id="ENSDARG00000026198">
    <property type="expression patterns" value="Expressed in head and 28 other cell types or tissues"/>
</dbReference>
<dbReference type="ExpressionAtlas" id="Q6GMI7">
    <property type="expression patterns" value="baseline"/>
</dbReference>
<dbReference type="GO" id="GO:0005737">
    <property type="term" value="C:cytoplasm"/>
    <property type="evidence" value="ECO:0007669"/>
    <property type="project" value="UniProtKB-SubCell"/>
</dbReference>
<dbReference type="GO" id="GO:0005634">
    <property type="term" value="C:nucleus"/>
    <property type="evidence" value="ECO:0007669"/>
    <property type="project" value="UniProtKB-SubCell"/>
</dbReference>
<dbReference type="GO" id="GO:0043874">
    <property type="term" value="F:acireductone synthase activity"/>
    <property type="evidence" value="ECO:0000250"/>
    <property type="project" value="UniProtKB"/>
</dbReference>
<dbReference type="GO" id="GO:0000287">
    <property type="term" value="F:magnesium ion binding"/>
    <property type="evidence" value="ECO:0007669"/>
    <property type="project" value="UniProtKB-UniRule"/>
</dbReference>
<dbReference type="GO" id="GO:0019509">
    <property type="term" value="P:L-methionine salvage from methylthioadenosine"/>
    <property type="evidence" value="ECO:0000250"/>
    <property type="project" value="UniProtKB"/>
</dbReference>
<dbReference type="CDD" id="cd01629">
    <property type="entry name" value="HAD_EP"/>
    <property type="match status" value="1"/>
</dbReference>
<dbReference type="FunFam" id="1.10.720.60:FF:000004">
    <property type="entry name" value="Enolase-phosphatase E1"/>
    <property type="match status" value="1"/>
</dbReference>
<dbReference type="FunFam" id="3.40.50.1000:FF:000102">
    <property type="entry name" value="Enolase-phosphatase E1"/>
    <property type="match status" value="1"/>
</dbReference>
<dbReference type="Gene3D" id="1.10.720.60">
    <property type="match status" value="1"/>
</dbReference>
<dbReference type="Gene3D" id="3.40.50.1000">
    <property type="entry name" value="HAD superfamily/HAD-like"/>
    <property type="match status" value="1"/>
</dbReference>
<dbReference type="HAMAP" id="MF_01681">
    <property type="entry name" value="Salvage_MtnC"/>
    <property type="match status" value="1"/>
</dbReference>
<dbReference type="HAMAP" id="MF_03117">
    <property type="entry name" value="Salvage_MtnC_euk"/>
    <property type="match status" value="1"/>
</dbReference>
<dbReference type="InterPro" id="IPR023943">
    <property type="entry name" value="Enolase-ppase_E1"/>
</dbReference>
<dbReference type="InterPro" id="IPR027511">
    <property type="entry name" value="ENOPH1_eukaryotes"/>
</dbReference>
<dbReference type="InterPro" id="IPR036412">
    <property type="entry name" value="HAD-like_sf"/>
</dbReference>
<dbReference type="InterPro" id="IPR006439">
    <property type="entry name" value="HAD-SF_hydro_IA"/>
</dbReference>
<dbReference type="InterPro" id="IPR023214">
    <property type="entry name" value="HAD_sf"/>
</dbReference>
<dbReference type="NCBIfam" id="TIGR01691">
    <property type="entry name" value="enolase-ppase"/>
    <property type="match status" value="1"/>
</dbReference>
<dbReference type="NCBIfam" id="TIGR01549">
    <property type="entry name" value="HAD-SF-IA-v1"/>
    <property type="match status" value="1"/>
</dbReference>
<dbReference type="PANTHER" id="PTHR20371">
    <property type="entry name" value="ENOLASE-PHOSPHATASE E1"/>
    <property type="match status" value="1"/>
</dbReference>
<dbReference type="PANTHER" id="PTHR20371:SF1">
    <property type="entry name" value="ENOLASE-PHOSPHATASE E1"/>
    <property type="match status" value="1"/>
</dbReference>
<dbReference type="Pfam" id="PF00702">
    <property type="entry name" value="Hydrolase"/>
    <property type="match status" value="1"/>
</dbReference>
<dbReference type="SFLD" id="SFLDG01129">
    <property type="entry name" value="C1.5:_HAD__Beta-PGM__Phosphata"/>
    <property type="match status" value="1"/>
</dbReference>
<dbReference type="SFLD" id="SFLDF00044">
    <property type="entry name" value="enolase-phosphatase"/>
    <property type="match status" value="1"/>
</dbReference>
<dbReference type="SUPFAM" id="SSF56784">
    <property type="entry name" value="HAD-like"/>
    <property type="match status" value="1"/>
</dbReference>
<accession>Q6GMI7</accession>
<reference key="1">
    <citation type="submission" date="2004-06" db="EMBL/GenBank/DDBJ databases">
        <authorList>
            <consortium name="NIH - Zebrafish Gene Collection (ZGC) project"/>
        </authorList>
    </citation>
    <scope>NUCLEOTIDE SEQUENCE [LARGE SCALE MRNA]</scope>
</reference>
<sequence length="261" mass="29978">MAAIAIPENTRVFLLDIEGTTTPITFVKDILFPYIRENLEDYLSAHWEEDECKQDVHLLKKQTEEDLRQNKACHVHTVDQTVHTDEEKAIREVVENVLWQMAADRKTTALKQLQGHMWRAAYMMGRIKGEVYQDVVPAIRRWRHHGLKIYIYSSGSVEAQKLLFGYSVQGDILDLFDGHFDTNIGAKVESKSYENIAERIGCQPEEIMFLTDVTREAKAAEDAGVNVAVVVRPGNMELTEEERDHYRIITSFNQLELIGNV</sequence>
<gene>
    <name type="primary">enoph1</name>
    <name type="synonym">masa</name>
    <name type="ORF">zgc:91991</name>
</gene>
<protein>
    <recommendedName>
        <fullName evidence="1">Enolase-phosphatase E1</fullName>
        <ecNumber evidence="1">3.1.3.77</ecNumber>
    </recommendedName>
    <alternativeName>
        <fullName evidence="1">2,3-diketo-5-methylthio-1-phosphopentane phosphatase</fullName>
    </alternativeName>
    <alternativeName>
        <fullName evidence="1">MASA homolog</fullName>
    </alternativeName>
</protein>
<proteinExistence type="evidence at transcript level"/>